<comment type="function">
    <text evidence="1">Required for maturation of 30S ribosomal subunits.</text>
</comment>
<comment type="subcellular location">
    <subcellularLocation>
        <location evidence="1">Cytoplasm</location>
    </subcellularLocation>
</comment>
<comment type="similarity">
    <text evidence="1">Belongs to the RimP family.</text>
</comment>
<dbReference type="EMBL" id="CP000820">
    <property type="protein sequence ID" value="ABW10633.1"/>
    <property type="molecule type" value="Genomic_DNA"/>
</dbReference>
<dbReference type="RefSeq" id="WP_020458809.1">
    <property type="nucleotide sequence ID" value="NC_009921.1"/>
</dbReference>
<dbReference type="SMR" id="A8L6F1"/>
<dbReference type="STRING" id="298653.Franean1_1179"/>
<dbReference type="KEGG" id="fre:Franean1_1179"/>
<dbReference type="eggNOG" id="COG0779">
    <property type="taxonomic scope" value="Bacteria"/>
</dbReference>
<dbReference type="HOGENOM" id="CLU_902407_0_0_11"/>
<dbReference type="GO" id="GO:0005829">
    <property type="term" value="C:cytosol"/>
    <property type="evidence" value="ECO:0007669"/>
    <property type="project" value="TreeGrafter"/>
</dbReference>
<dbReference type="GO" id="GO:0000028">
    <property type="term" value="P:ribosomal small subunit assembly"/>
    <property type="evidence" value="ECO:0007669"/>
    <property type="project" value="TreeGrafter"/>
</dbReference>
<dbReference type="GO" id="GO:0006412">
    <property type="term" value="P:translation"/>
    <property type="evidence" value="ECO:0007669"/>
    <property type="project" value="TreeGrafter"/>
</dbReference>
<dbReference type="Gene3D" id="3.30.300.70">
    <property type="entry name" value="RimP-like superfamily, N-terminal"/>
    <property type="match status" value="1"/>
</dbReference>
<dbReference type="HAMAP" id="MF_01077">
    <property type="entry name" value="RimP"/>
    <property type="match status" value="1"/>
</dbReference>
<dbReference type="InterPro" id="IPR003728">
    <property type="entry name" value="Ribosome_maturation_RimP"/>
</dbReference>
<dbReference type="InterPro" id="IPR028989">
    <property type="entry name" value="RimP_N"/>
</dbReference>
<dbReference type="InterPro" id="IPR035956">
    <property type="entry name" value="RimP_N_sf"/>
</dbReference>
<dbReference type="NCBIfam" id="NF000930">
    <property type="entry name" value="PRK00092.2-2"/>
    <property type="match status" value="1"/>
</dbReference>
<dbReference type="PANTHER" id="PTHR33867">
    <property type="entry name" value="RIBOSOME MATURATION FACTOR RIMP"/>
    <property type="match status" value="1"/>
</dbReference>
<dbReference type="PANTHER" id="PTHR33867:SF1">
    <property type="entry name" value="RIBOSOME MATURATION FACTOR RIMP"/>
    <property type="match status" value="1"/>
</dbReference>
<dbReference type="Pfam" id="PF02576">
    <property type="entry name" value="RimP_N"/>
    <property type="match status" value="1"/>
</dbReference>
<dbReference type="SUPFAM" id="SSF75420">
    <property type="entry name" value="YhbC-like, N-terminal domain"/>
    <property type="match status" value="1"/>
</dbReference>
<organism>
    <name type="scientific">Parafrankia sp. (strain EAN1pec)</name>
    <dbReference type="NCBI Taxonomy" id="298653"/>
    <lineage>
        <taxon>Bacteria</taxon>
        <taxon>Bacillati</taxon>
        <taxon>Actinomycetota</taxon>
        <taxon>Actinomycetes</taxon>
        <taxon>Frankiales</taxon>
        <taxon>Frankiaceae</taxon>
        <taxon>Parafrankia</taxon>
    </lineage>
</organism>
<name>RIMP_PARS2</name>
<feature type="chain" id="PRO_0000384672" description="Ribosome maturation factor RimP">
    <location>
        <begin position="1"/>
        <end position="308"/>
    </location>
</feature>
<feature type="region of interest" description="Disordered" evidence="2">
    <location>
        <begin position="1"/>
        <end position="31"/>
    </location>
</feature>
<feature type="region of interest" description="Disordered" evidence="2">
    <location>
        <begin position="94"/>
        <end position="113"/>
    </location>
</feature>
<feature type="region of interest" description="Disordered" evidence="2">
    <location>
        <begin position="249"/>
        <end position="308"/>
    </location>
</feature>
<feature type="compositionally biased region" description="Low complexity" evidence="2">
    <location>
        <begin position="17"/>
        <end position="31"/>
    </location>
</feature>
<feature type="compositionally biased region" description="Gly residues" evidence="2">
    <location>
        <begin position="99"/>
        <end position="113"/>
    </location>
</feature>
<feature type="compositionally biased region" description="Acidic residues" evidence="2">
    <location>
        <begin position="249"/>
        <end position="269"/>
    </location>
</feature>
<proteinExistence type="inferred from homology"/>
<reference key="1">
    <citation type="journal article" date="2007" name="Genome Res.">
        <title>Genome characteristics of facultatively symbiotic Frankia sp. strains reflect host range and host plant biogeography.</title>
        <authorList>
            <person name="Normand P."/>
            <person name="Lapierre P."/>
            <person name="Tisa L.S."/>
            <person name="Gogarten J.P."/>
            <person name="Alloisio N."/>
            <person name="Bagnarol E."/>
            <person name="Bassi C.A."/>
            <person name="Berry A.M."/>
            <person name="Bickhart D.M."/>
            <person name="Choisne N."/>
            <person name="Couloux A."/>
            <person name="Cournoyer B."/>
            <person name="Cruveiller S."/>
            <person name="Daubin V."/>
            <person name="Demange N."/>
            <person name="Francino M.P."/>
            <person name="Goltsman E."/>
            <person name="Huang Y."/>
            <person name="Kopp O.R."/>
            <person name="Labarre L."/>
            <person name="Lapidus A."/>
            <person name="Lavire C."/>
            <person name="Marechal J."/>
            <person name="Martinez M."/>
            <person name="Mastronunzio J.E."/>
            <person name="Mullin B.C."/>
            <person name="Niemann J."/>
            <person name="Pujic P."/>
            <person name="Rawnsley T."/>
            <person name="Rouy Z."/>
            <person name="Schenowitz C."/>
            <person name="Sellstedt A."/>
            <person name="Tavares F."/>
            <person name="Tomkins J.P."/>
            <person name="Vallenet D."/>
            <person name="Valverde C."/>
            <person name="Wall L.G."/>
            <person name="Wang Y."/>
            <person name="Medigue C."/>
            <person name="Benson D.R."/>
        </authorList>
    </citation>
    <scope>NUCLEOTIDE SEQUENCE [LARGE SCALE GENOMIC DNA]</scope>
    <source>
        <strain>EAN1pec</strain>
    </source>
</reference>
<gene>
    <name evidence="1" type="primary">rimP</name>
    <name type="ordered locus">Franean1_1179</name>
</gene>
<sequence length="308" mass="31186">MARAGESGRAGVRRSTAPSRRTGGARAAADAVRAELRRRLEPSLTTAGFDLEDVSVTRAGARSVVRVVVDRDGGIDLDAVADASRLVSAVLDGEDIGTDGAGGTGGSGGAAGGSGASPISGAYVLEVTSPGVDRPLVEPRHWRRAVGRLVVVRRADGVEVEGRVLSADDEGADLAVPTAPARRGRPVRRRIERVVYATVARAAVQVEFGSATDADGDTDVDADAGAELPAGAELPAGADLGLGAESDVDLDEGLEDDDGLEDEDDEDEYGAAGGGAPAGSAADEVVEDHGAVDTEAGLIGRTGKEMNR</sequence>
<protein>
    <recommendedName>
        <fullName evidence="1">Ribosome maturation factor RimP</fullName>
    </recommendedName>
</protein>
<keyword id="KW-0963">Cytoplasm</keyword>
<keyword id="KW-0690">Ribosome biogenesis</keyword>
<evidence type="ECO:0000255" key="1">
    <source>
        <dbReference type="HAMAP-Rule" id="MF_01077"/>
    </source>
</evidence>
<evidence type="ECO:0000256" key="2">
    <source>
        <dbReference type="SAM" id="MobiDB-lite"/>
    </source>
</evidence>
<accession>A8L6F1</accession>